<sequence>MAQAIGPRLYSCCNCRNHVGLHDDIISKAFQGRTGRAFLFSHAMNIVVGPKEDRNLLTGLHTVADISCVDCNEPLGWKYERAYETSQKYKEGKFIFEKAKIVKEDW</sequence>
<dbReference type="EMBL" id="AL035602">
    <property type="protein sequence ID" value="CAB38286.1"/>
    <property type="status" value="ALT_SEQ"/>
    <property type="molecule type" value="Genomic_DNA"/>
</dbReference>
<dbReference type="EMBL" id="AL161571">
    <property type="protein sequence ID" value="CAB81424.1"/>
    <property type="status" value="ALT_SEQ"/>
    <property type="molecule type" value="Genomic_DNA"/>
</dbReference>
<dbReference type="EMBL" id="CP002687">
    <property type="protein sequence ID" value="AEE85388.1"/>
    <property type="molecule type" value="Genomic_DNA"/>
</dbReference>
<dbReference type="EMBL" id="CP002687">
    <property type="protein sequence ID" value="ANM66414.1"/>
    <property type="molecule type" value="Genomic_DNA"/>
</dbReference>
<dbReference type="EMBL" id="CP002687">
    <property type="protein sequence ID" value="ANM66415.1"/>
    <property type="molecule type" value="Genomic_DNA"/>
</dbReference>
<dbReference type="EMBL" id="CP002687">
    <property type="protein sequence ID" value="ANM66416.1"/>
    <property type="molecule type" value="Genomic_DNA"/>
</dbReference>
<dbReference type="PIR" id="T05879">
    <property type="entry name" value="T05879"/>
</dbReference>
<dbReference type="RefSeq" id="NP_001031733.1">
    <property type="nucleotide sequence ID" value="NM_001036656.5"/>
</dbReference>
<dbReference type="RefSeq" id="NP_001328310.1">
    <property type="nucleotide sequence ID" value="NM_001341881.1"/>
</dbReference>
<dbReference type="RefSeq" id="NP_001328311.1">
    <property type="nucleotide sequence ID" value="NM_001341879.1"/>
</dbReference>
<dbReference type="RefSeq" id="NP_001328312.1">
    <property type="nucleotide sequence ID" value="NM_001341880.1"/>
</dbReference>
<dbReference type="SMR" id="Q9T096"/>
<dbReference type="FunCoup" id="Q9T096">
    <property type="interactions" value="1055"/>
</dbReference>
<dbReference type="STRING" id="3702.Q9T096"/>
<dbReference type="PaxDb" id="3702-AT4G27745.1"/>
<dbReference type="ProteomicsDB" id="242918"/>
<dbReference type="EnsemblPlants" id="AT4G27745.1">
    <property type="protein sequence ID" value="AT4G27745.1"/>
    <property type="gene ID" value="AT4G27745"/>
</dbReference>
<dbReference type="EnsemblPlants" id="AT4G27745.2">
    <property type="protein sequence ID" value="AT4G27745.2"/>
    <property type="gene ID" value="AT4G27745"/>
</dbReference>
<dbReference type="EnsemblPlants" id="AT4G27745.3">
    <property type="protein sequence ID" value="AT4G27745.3"/>
    <property type="gene ID" value="AT4G27745"/>
</dbReference>
<dbReference type="EnsemblPlants" id="AT4G27745.4">
    <property type="protein sequence ID" value="AT4G27745.4"/>
    <property type="gene ID" value="AT4G27745"/>
</dbReference>
<dbReference type="GeneID" id="3770406"/>
<dbReference type="Gramene" id="AT4G27745.1">
    <property type="protein sequence ID" value="AT4G27745.1"/>
    <property type="gene ID" value="AT4G27745"/>
</dbReference>
<dbReference type="Gramene" id="AT4G27745.2">
    <property type="protein sequence ID" value="AT4G27745.2"/>
    <property type="gene ID" value="AT4G27745"/>
</dbReference>
<dbReference type="Gramene" id="AT4G27745.3">
    <property type="protein sequence ID" value="AT4G27745.3"/>
    <property type="gene ID" value="AT4G27745"/>
</dbReference>
<dbReference type="Gramene" id="AT4G27745.4">
    <property type="protein sequence ID" value="AT4G27745.4"/>
    <property type="gene ID" value="AT4G27745"/>
</dbReference>
<dbReference type="KEGG" id="ath:AT4G27745"/>
<dbReference type="Araport" id="AT4G27745"/>
<dbReference type="TAIR" id="AT4G27745"/>
<dbReference type="eggNOG" id="KOG3399">
    <property type="taxonomic scope" value="Eukaryota"/>
</dbReference>
<dbReference type="HOGENOM" id="CLU_043857_5_2_1"/>
<dbReference type="InParanoid" id="Q9T096"/>
<dbReference type="OMA" id="CADCRQV"/>
<dbReference type="OrthoDB" id="6407410at2759"/>
<dbReference type="PhylomeDB" id="Q9T096"/>
<dbReference type="PRO" id="PR:Q9T096"/>
<dbReference type="Proteomes" id="UP000006548">
    <property type="component" value="Chromosome 4"/>
</dbReference>
<dbReference type="ExpressionAtlas" id="Q9T096">
    <property type="expression patterns" value="baseline and differential"/>
</dbReference>
<dbReference type="GO" id="GO:0046872">
    <property type="term" value="F:metal ion binding"/>
    <property type="evidence" value="ECO:0007669"/>
    <property type="project" value="UniProtKB-KW"/>
</dbReference>
<dbReference type="InterPro" id="IPR034751">
    <property type="entry name" value="Yippee"/>
</dbReference>
<dbReference type="InterPro" id="IPR004910">
    <property type="entry name" value="Yippee/Mis18/Cereblon"/>
</dbReference>
<dbReference type="InterPro" id="IPR039058">
    <property type="entry name" value="Yippee_fam"/>
</dbReference>
<dbReference type="PANTHER" id="PTHR13848">
    <property type="entry name" value="PROTEIN YIPPEE-LIKE CG15309-RELATED"/>
    <property type="match status" value="1"/>
</dbReference>
<dbReference type="Pfam" id="PF03226">
    <property type="entry name" value="Yippee-Mis18"/>
    <property type="match status" value="1"/>
</dbReference>
<dbReference type="PROSITE" id="PS51792">
    <property type="entry name" value="YIPPEE"/>
    <property type="match status" value="1"/>
</dbReference>
<feature type="chain" id="PRO_0000212405" description="Protein yippee-like At4g27745">
    <location>
        <begin position="1"/>
        <end position="106"/>
    </location>
</feature>
<feature type="domain" description="Yippee" evidence="1">
    <location>
        <begin position="8"/>
        <end position="105"/>
    </location>
</feature>
<feature type="binding site" evidence="1">
    <location>
        <position position="12"/>
    </location>
    <ligand>
        <name>Zn(2+)</name>
        <dbReference type="ChEBI" id="CHEBI:29105"/>
    </ligand>
</feature>
<feature type="binding site" evidence="1">
    <location>
        <position position="15"/>
    </location>
    <ligand>
        <name>Zn(2+)</name>
        <dbReference type="ChEBI" id="CHEBI:29105"/>
    </ligand>
</feature>
<feature type="binding site" evidence="1">
    <location>
        <position position="68"/>
    </location>
    <ligand>
        <name>Zn(2+)</name>
        <dbReference type="ChEBI" id="CHEBI:29105"/>
    </ligand>
</feature>
<feature type="binding site" evidence="1">
    <location>
        <position position="71"/>
    </location>
    <ligand>
        <name>Zn(2+)</name>
        <dbReference type="ChEBI" id="CHEBI:29105"/>
    </ligand>
</feature>
<protein>
    <recommendedName>
        <fullName>Protein yippee-like At4g27745</fullName>
    </recommendedName>
</protein>
<accession>Q9T096</accession>
<accession>Q2V3E1</accession>
<reference key="1">
    <citation type="journal article" date="1999" name="Nature">
        <title>Sequence and analysis of chromosome 4 of the plant Arabidopsis thaliana.</title>
        <authorList>
            <person name="Mayer K.F.X."/>
            <person name="Schueller C."/>
            <person name="Wambutt R."/>
            <person name="Murphy G."/>
            <person name="Volckaert G."/>
            <person name="Pohl T."/>
            <person name="Duesterhoeft A."/>
            <person name="Stiekema W."/>
            <person name="Entian K.-D."/>
            <person name="Terryn N."/>
            <person name="Harris B."/>
            <person name="Ansorge W."/>
            <person name="Brandt P."/>
            <person name="Grivell L.A."/>
            <person name="Rieger M."/>
            <person name="Weichselgartner M."/>
            <person name="de Simone V."/>
            <person name="Obermaier B."/>
            <person name="Mache R."/>
            <person name="Mueller M."/>
            <person name="Kreis M."/>
            <person name="Delseny M."/>
            <person name="Puigdomenech P."/>
            <person name="Watson M."/>
            <person name="Schmidtheini T."/>
            <person name="Reichert B."/>
            <person name="Portetelle D."/>
            <person name="Perez-Alonso M."/>
            <person name="Boutry M."/>
            <person name="Bancroft I."/>
            <person name="Vos P."/>
            <person name="Hoheisel J."/>
            <person name="Zimmermann W."/>
            <person name="Wedler H."/>
            <person name="Ridley P."/>
            <person name="Langham S.-A."/>
            <person name="McCullagh B."/>
            <person name="Bilham L."/>
            <person name="Robben J."/>
            <person name="van der Schueren J."/>
            <person name="Grymonprez B."/>
            <person name="Chuang Y.-J."/>
            <person name="Vandenbussche F."/>
            <person name="Braeken M."/>
            <person name="Weltjens I."/>
            <person name="Voet M."/>
            <person name="Bastiaens I."/>
            <person name="Aert R."/>
            <person name="Defoor E."/>
            <person name="Weitzenegger T."/>
            <person name="Bothe G."/>
            <person name="Ramsperger U."/>
            <person name="Hilbert H."/>
            <person name="Braun M."/>
            <person name="Holzer E."/>
            <person name="Brandt A."/>
            <person name="Peters S."/>
            <person name="van Staveren M."/>
            <person name="Dirkse W."/>
            <person name="Mooijman P."/>
            <person name="Klein Lankhorst R."/>
            <person name="Rose M."/>
            <person name="Hauf J."/>
            <person name="Koetter P."/>
            <person name="Berneiser S."/>
            <person name="Hempel S."/>
            <person name="Feldpausch M."/>
            <person name="Lamberth S."/>
            <person name="Van den Daele H."/>
            <person name="De Keyser A."/>
            <person name="Buysshaert C."/>
            <person name="Gielen J."/>
            <person name="Villarroel R."/>
            <person name="De Clercq R."/>
            <person name="van Montagu M."/>
            <person name="Rogers J."/>
            <person name="Cronin A."/>
            <person name="Quail M.A."/>
            <person name="Bray-Allen S."/>
            <person name="Clark L."/>
            <person name="Doggett J."/>
            <person name="Hall S."/>
            <person name="Kay M."/>
            <person name="Lennard N."/>
            <person name="McLay K."/>
            <person name="Mayes R."/>
            <person name="Pettett A."/>
            <person name="Rajandream M.A."/>
            <person name="Lyne M."/>
            <person name="Benes V."/>
            <person name="Rechmann S."/>
            <person name="Borkova D."/>
            <person name="Bloecker H."/>
            <person name="Scharfe M."/>
            <person name="Grimm M."/>
            <person name="Loehnert T.-H."/>
            <person name="Dose S."/>
            <person name="de Haan M."/>
            <person name="Maarse A.C."/>
            <person name="Schaefer M."/>
            <person name="Mueller-Auer S."/>
            <person name="Gabel C."/>
            <person name="Fuchs M."/>
            <person name="Fartmann B."/>
            <person name="Granderath K."/>
            <person name="Dauner D."/>
            <person name="Herzl A."/>
            <person name="Neumann S."/>
            <person name="Argiriou A."/>
            <person name="Vitale D."/>
            <person name="Liguori R."/>
            <person name="Piravandi E."/>
            <person name="Massenet O."/>
            <person name="Quigley F."/>
            <person name="Clabauld G."/>
            <person name="Muendlein A."/>
            <person name="Felber R."/>
            <person name="Schnabl S."/>
            <person name="Hiller R."/>
            <person name="Schmidt W."/>
            <person name="Lecharny A."/>
            <person name="Aubourg S."/>
            <person name="Chefdor F."/>
            <person name="Cooke R."/>
            <person name="Berger C."/>
            <person name="Monfort A."/>
            <person name="Casacuberta E."/>
            <person name="Gibbons T."/>
            <person name="Weber N."/>
            <person name="Vandenbol M."/>
            <person name="Bargues M."/>
            <person name="Terol J."/>
            <person name="Torres A."/>
            <person name="Perez-Perez A."/>
            <person name="Purnelle B."/>
            <person name="Bent E."/>
            <person name="Johnson S."/>
            <person name="Tacon D."/>
            <person name="Jesse T."/>
            <person name="Heijnen L."/>
            <person name="Schwarz S."/>
            <person name="Scholler P."/>
            <person name="Heber S."/>
            <person name="Francs P."/>
            <person name="Bielke C."/>
            <person name="Frishman D."/>
            <person name="Haase D."/>
            <person name="Lemcke K."/>
            <person name="Mewes H.-W."/>
            <person name="Stocker S."/>
            <person name="Zaccaria P."/>
            <person name="Bevan M."/>
            <person name="Wilson R.K."/>
            <person name="de la Bastide M."/>
            <person name="Habermann K."/>
            <person name="Parnell L."/>
            <person name="Dedhia N."/>
            <person name="Gnoj L."/>
            <person name="Schutz K."/>
            <person name="Huang E."/>
            <person name="Spiegel L."/>
            <person name="Sekhon M."/>
            <person name="Murray J."/>
            <person name="Sheet P."/>
            <person name="Cordes M."/>
            <person name="Abu-Threideh J."/>
            <person name="Stoneking T."/>
            <person name="Kalicki J."/>
            <person name="Graves T."/>
            <person name="Harmon G."/>
            <person name="Edwards J."/>
            <person name="Latreille P."/>
            <person name="Courtney L."/>
            <person name="Cloud J."/>
            <person name="Abbott A."/>
            <person name="Scott K."/>
            <person name="Johnson D."/>
            <person name="Minx P."/>
            <person name="Bentley D."/>
            <person name="Fulton B."/>
            <person name="Miller N."/>
            <person name="Greco T."/>
            <person name="Kemp K."/>
            <person name="Kramer J."/>
            <person name="Fulton L."/>
            <person name="Mardis E."/>
            <person name="Dante M."/>
            <person name="Pepin K."/>
            <person name="Hillier L.W."/>
            <person name="Nelson J."/>
            <person name="Spieth J."/>
            <person name="Ryan E."/>
            <person name="Andrews S."/>
            <person name="Geisel C."/>
            <person name="Layman D."/>
            <person name="Du H."/>
            <person name="Ali J."/>
            <person name="Berghoff A."/>
            <person name="Jones K."/>
            <person name="Drone K."/>
            <person name="Cotton M."/>
            <person name="Joshu C."/>
            <person name="Antonoiu B."/>
            <person name="Zidanic M."/>
            <person name="Strong C."/>
            <person name="Sun H."/>
            <person name="Lamar B."/>
            <person name="Yordan C."/>
            <person name="Ma P."/>
            <person name="Zhong J."/>
            <person name="Preston R."/>
            <person name="Vil D."/>
            <person name="Shekher M."/>
            <person name="Matero A."/>
            <person name="Shah R."/>
            <person name="Swaby I.K."/>
            <person name="O'Shaughnessy A."/>
            <person name="Rodriguez M."/>
            <person name="Hoffman J."/>
            <person name="Till S."/>
            <person name="Granat S."/>
            <person name="Shohdy N."/>
            <person name="Hasegawa A."/>
            <person name="Hameed A."/>
            <person name="Lodhi M."/>
            <person name="Johnson A."/>
            <person name="Chen E."/>
            <person name="Marra M.A."/>
            <person name="Martienssen R."/>
            <person name="McCombie W.R."/>
        </authorList>
    </citation>
    <scope>NUCLEOTIDE SEQUENCE [LARGE SCALE GENOMIC DNA]</scope>
    <source>
        <strain>cv. Columbia</strain>
    </source>
</reference>
<reference key="2">
    <citation type="journal article" date="2017" name="Plant J.">
        <title>Araport11: a complete reannotation of the Arabidopsis thaliana reference genome.</title>
        <authorList>
            <person name="Cheng C.Y."/>
            <person name="Krishnakumar V."/>
            <person name="Chan A.P."/>
            <person name="Thibaud-Nissen F."/>
            <person name="Schobel S."/>
            <person name="Town C.D."/>
        </authorList>
    </citation>
    <scope>GENOME REANNOTATION</scope>
    <source>
        <strain>cv. Columbia</strain>
    </source>
</reference>
<proteinExistence type="inferred from homology"/>
<comment type="similarity">
    <text evidence="2">Belongs to the yippee family.</text>
</comment>
<comment type="sequence caution" evidence="2">
    <conflict type="erroneous gene model prediction">
        <sequence resource="EMBL-CDS" id="CAB38286"/>
    </conflict>
    <text>The predicted gene At4g27740 has been split into 2 genes: At4g27740 and At4g27745.</text>
</comment>
<comment type="sequence caution" evidence="2">
    <conflict type="erroneous gene model prediction">
        <sequence resource="EMBL-CDS" id="CAB81424"/>
    </conflict>
    <text>The predicted gene At4g27740 has been split into 2 genes: At4g27740 and At4g27745.</text>
</comment>
<evidence type="ECO:0000255" key="1">
    <source>
        <dbReference type="PROSITE-ProRule" id="PRU01128"/>
    </source>
</evidence>
<evidence type="ECO:0000305" key="2"/>
<name>YIPL6_ARATH</name>
<keyword id="KW-0479">Metal-binding</keyword>
<keyword id="KW-1185">Reference proteome</keyword>
<keyword id="KW-0862">Zinc</keyword>
<gene>
    <name type="ordered locus">At4g27745</name>
    <name type="ORF">T29A15.230</name>
</gene>
<organism>
    <name type="scientific">Arabidopsis thaliana</name>
    <name type="common">Mouse-ear cress</name>
    <dbReference type="NCBI Taxonomy" id="3702"/>
    <lineage>
        <taxon>Eukaryota</taxon>
        <taxon>Viridiplantae</taxon>
        <taxon>Streptophyta</taxon>
        <taxon>Embryophyta</taxon>
        <taxon>Tracheophyta</taxon>
        <taxon>Spermatophyta</taxon>
        <taxon>Magnoliopsida</taxon>
        <taxon>eudicotyledons</taxon>
        <taxon>Gunneridae</taxon>
        <taxon>Pentapetalae</taxon>
        <taxon>rosids</taxon>
        <taxon>malvids</taxon>
        <taxon>Brassicales</taxon>
        <taxon>Brassicaceae</taxon>
        <taxon>Camelineae</taxon>
        <taxon>Arabidopsis</taxon>
    </lineage>
</organism>